<keyword id="KW-0614">Plasmid</keyword>
<keyword id="KW-1277">Toxin-antitoxin system</keyword>
<proteinExistence type="inferred from homology"/>
<protein>
    <recommendedName>
        <fullName>Antitoxin epsilon 1</fullName>
    </recommendedName>
</protein>
<feature type="initiator methionine" description="Removed" evidence="1">
    <location>
        <position position="1"/>
    </location>
</feature>
<feature type="chain" id="PRO_0000221546" description="Antitoxin epsilon 1">
    <location>
        <begin position="2"/>
        <end position="90"/>
    </location>
</feature>
<name>EATX1_ENTFL</name>
<sequence length="90" mass="10733">MAVTYEKTFEIEIINELSASVYNRVLNYVLNHELDTKNTRLLEVNLLNQLEVAQEVDLFQQPFEELQAIHEYWRSMNQYSKQILNKEKVA</sequence>
<geneLocation type="plasmid">
    <name>pRE25</name>
</geneLocation>
<comment type="function">
    <text evidence="1">Antitoxin component of a type II toxin-antitoxin (TA) system. Neutralizes the toxic effect of zeta toxin. Part of a postsegregational killing (PSK) system involved in the killing of plasmid-free cells. Continuous synthesis of the epsilon antitoxin is required to counteract the zeta toxin (By similarity).</text>
</comment>
<comment type="subunit">
    <text evidence="1">In the presence of the zeta toxin, forms an inactive PezA(2)PezT(2) heterotetramer.</text>
</comment>
<comment type="similarity">
    <text evidence="2">Belongs to the epsilon antitoxin family.</text>
</comment>
<dbReference type="EMBL" id="X92945">
    <property type="protein sequence ID" value="CAC29204.1"/>
    <property type="molecule type" value="Genomic_DNA"/>
</dbReference>
<dbReference type="RefSeq" id="WP_002331065.1">
    <property type="nucleotide sequence ID" value="NC_008445.1"/>
</dbReference>
<dbReference type="RefSeq" id="YP_783933.1">
    <property type="nucleotide sequence ID" value="NC_008445.1"/>
</dbReference>
<dbReference type="SMR" id="Q9AL01"/>
<dbReference type="GO" id="GO:0015643">
    <property type="term" value="F:toxic substance binding"/>
    <property type="evidence" value="ECO:0007669"/>
    <property type="project" value="InterPro"/>
</dbReference>
<dbReference type="GO" id="GO:0031342">
    <property type="term" value="P:negative regulation of cell killing"/>
    <property type="evidence" value="ECO:0007669"/>
    <property type="project" value="InterPro"/>
</dbReference>
<dbReference type="GO" id="GO:0009636">
    <property type="term" value="P:response to toxic substance"/>
    <property type="evidence" value="ECO:0007669"/>
    <property type="project" value="InterPro"/>
</dbReference>
<dbReference type="Gene3D" id="1.10.8.130">
    <property type="match status" value="1"/>
</dbReference>
<dbReference type="InterPro" id="IPR035569">
    <property type="entry name" value="Antitoxin_epsilon/PezA_dom_sf"/>
</dbReference>
<dbReference type="InterPro" id="IPR015090">
    <property type="entry name" value="Epsilon_PezA_dom"/>
</dbReference>
<dbReference type="Pfam" id="PF08998">
    <property type="entry name" value="Epsilon_antitox"/>
    <property type="match status" value="1"/>
</dbReference>
<dbReference type="SUPFAM" id="SSF81710">
    <property type="entry name" value="Plasmid maintenance system epsilon/zeta, antidote epsilon subunit"/>
    <property type="match status" value="1"/>
</dbReference>
<accession>Q9AL01</accession>
<evidence type="ECO:0000250" key="1"/>
<evidence type="ECO:0000305" key="2"/>
<organism>
    <name type="scientific">Enterococcus faecalis</name>
    <name type="common">Streptococcus faecalis</name>
    <dbReference type="NCBI Taxonomy" id="1351"/>
    <lineage>
        <taxon>Bacteria</taxon>
        <taxon>Bacillati</taxon>
        <taxon>Bacillota</taxon>
        <taxon>Bacilli</taxon>
        <taxon>Lactobacillales</taxon>
        <taxon>Enterococcaceae</taxon>
        <taxon>Enterococcus</taxon>
    </lineage>
</organism>
<reference key="1">
    <citation type="journal article" date="2001" name="Plasmid">
        <title>Sequence of the 50-kb conjugative multiresistance plasmid pRE25 from Enterococcus faecalis RE25.</title>
        <authorList>
            <person name="Schwarz F.V."/>
            <person name="Perreten V."/>
            <person name="Teuber M."/>
        </authorList>
    </citation>
    <scope>NUCLEOTIDE SEQUENCE [GENOMIC DNA]</scope>
    <source>
        <strain>RE25</strain>
    </source>
</reference>